<name>YL324_MIMIV</name>
<feature type="chain" id="PRO_0000071265" description="Uncharacterized protein L324">
    <location>
        <begin position="1"/>
        <end position="195"/>
    </location>
</feature>
<feature type="region of interest" description="Disordered" evidence="1">
    <location>
        <begin position="1"/>
        <end position="118"/>
    </location>
</feature>
<feature type="compositionally biased region" description="Polar residues" evidence="1">
    <location>
        <begin position="1"/>
        <end position="11"/>
    </location>
</feature>
<feature type="compositionally biased region" description="Acidic residues" evidence="1">
    <location>
        <begin position="35"/>
        <end position="46"/>
    </location>
</feature>
<feature type="compositionally biased region" description="Low complexity" evidence="1">
    <location>
        <begin position="47"/>
        <end position="63"/>
    </location>
</feature>
<feature type="compositionally biased region" description="Basic and acidic residues" evidence="1">
    <location>
        <begin position="82"/>
        <end position="93"/>
    </location>
</feature>
<feature type="compositionally biased region" description="Acidic residues" evidence="1">
    <location>
        <begin position="94"/>
        <end position="110"/>
    </location>
</feature>
<organism>
    <name type="scientific">Acanthamoeba polyphaga mimivirus</name>
    <name type="common">APMV</name>
    <dbReference type="NCBI Taxonomy" id="212035"/>
    <lineage>
        <taxon>Viruses</taxon>
        <taxon>Varidnaviria</taxon>
        <taxon>Bamfordvirae</taxon>
        <taxon>Nucleocytoviricota</taxon>
        <taxon>Megaviricetes</taxon>
        <taxon>Imitervirales</taxon>
        <taxon>Mimiviridae</taxon>
        <taxon>Megamimivirinae</taxon>
        <taxon>Mimivirus</taxon>
        <taxon>Mimivirus bradfordmassiliense</taxon>
    </lineage>
</organism>
<reference key="1">
    <citation type="journal article" date="2004" name="Science">
        <title>The 1.2-megabase genome sequence of Mimivirus.</title>
        <authorList>
            <person name="Raoult D."/>
            <person name="Audic S."/>
            <person name="Robert C."/>
            <person name="Abergel C."/>
            <person name="Renesto P."/>
            <person name="Ogata H."/>
            <person name="La Scola B."/>
            <person name="Susan M."/>
            <person name="Claverie J.-M."/>
        </authorList>
    </citation>
    <scope>NUCLEOTIDE SEQUENCE [LARGE SCALE GENOMIC DNA]</scope>
    <source>
        <strain>Rowbotham-Bradford</strain>
    </source>
</reference>
<protein>
    <recommendedName>
        <fullName>Uncharacterized protein L324</fullName>
    </recommendedName>
</protein>
<organismHost>
    <name type="scientific">Acanthamoeba polyphaga</name>
    <name type="common">Amoeba</name>
    <dbReference type="NCBI Taxonomy" id="5757"/>
</organismHost>
<sequence length="195" mass="22154">MDYIVSPTSSEPYEFYRDRTFRGGANGNQTNMDTSPEDITDSDEQNDTTTTTSEMSSTSSVPSIGENKVSKNNKSAGISKISDSKLIFDSDNKDQDDEDDEDDEELEGLDTEGGFVLSNSDITTSDLYNLQMRIFRSETETDDDTDSETTENVRRALNNINSRKNIFDTEDRKILNMNSTEKWTRKTIKKNNKYH</sequence>
<keyword id="KW-1185">Reference proteome</keyword>
<proteinExistence type="predicted"/>
<dbReference type="EMBL" id="AY653733">
    <property type="protein sequence ID" value="AAV50593.1"/>
    <property type="molecule type" value="Genomic_DNA"/>
</dbReference>
<dbReference type="Proteomes" id="UP000001134">
    <property type="component" value="Genome"/>
</dbReference>
<accession>Q5UQR7</accession>
<evidence type="ECO:0000256" key="1">
    <source>
        <dbReference type="SAM" id="MobiDB-lite"/>
    </source>
</evidence>
<gene>
    <name type="ordered locus">MIMI_L324</name>
</gene>